<gene>
    <name evidence="1" type="primary">folE2</name>
    <name type="ordered locus">Noc_2039</name>
</gene>
<protein>
    <recommendedName>
        <fullName evidence="1">GTP cyclohydrolase FolE2</fullName>
        <ecNumber evidence="1">3.5.4.16</ecNumber>
    </recommendedName>
</protein>
<feature type="chain" id="PRO_0000289500" description="GTP cyclohydrolase FolE2">
    <location>
        <begin position="1"/>
        <end position="267"/>
    </location>
</feature>
<feature type="site" description="May be catalytically important" evidence="1">
    <location>
        <position position="156"/>
    </location>
</feature>
<sequence>MNPIVPAVERPIEDVQAKADERQIAINKVGIKDIRHPVRVSDRNGGEQHTVANFNMYVDLPHHFKGTHMSRFVEILNQHEHEITVRSFREMLREMNHRLQAESGHIEMVFPYFVTKQAPVSKVQSLMDYQVTFIGEIKGDKPQITVKVVVPVTSLCPCSKQISDYGAHNQRSHVTVAVRIEGFIWLEDIIDLVEEEASCEIYGLLKRPDEKYVTERAYDNPKFVEDMVRDVAARLNQDDRVSAYRVESENFESIHNHSAYAMIEREK</sequence>
<dbReference type="EC" id="3.5.4.16" evidence="1"/>
<dbReference type="EMBL" id="CP000127">
    <property type="protein sequence ID" value="ABA58499.1"/>
    <property type="molecule type" value="Genomic_DNA"/>
</dbReference>
<dbReference type="RefSeq" id="WP_002808786.1">
    <property type="nucleotide sequence ID" value="NC_007484.1"/>
</dbReference>
<dbReference type="SMR" id="Q3J9J7"/>
<dbReference type="STRING" id="323261.Noc_2039"/>
<dbReference type="KEGG" id="noc:Noc_2039"/>
<dbReference type="eggNOG" id="COG1469">
    <property type="taxonomic scope" value="Bacteria"/>
</dbReference>
<dbReference type="HOGENOM" id="CLU_062816_1_1_6"/>
<dbReference type="InParanoid" id="Q3J9J7"/>
<dbReference type="UniPathway" id="UPA00848">
    <property type="reaction ID" value="UER00151"/>
</dbReference>
<dbReference type="Proteomes" id="UP000006838">
    <property type="component" value="Chromosome"/>
</dbReference>
<dbReference type="GO" id="GO:0003934">
    <property type="term" value="F:GTP cyclohydrolase I activity"/>
    <property type="evidence" value="ECO:0007669"/>
    <property type="project" value="UniProtKB-UniRule"/>
</dbReference>
<dbReference type="GO" id="GO:0046654">
    <property type="term" value="P:tetrahydrofolate biosynthetic process"/>
    <property type="evidence" value="ECO:0007669"/>
    <property type="project" value="UniProtKB-UniRule"/>
</dbReference>
<dbReference type="Gene3D" id="3.10.270.10">
    <property type="entry name" value="Urate Oxidase"/>
    <property type="match status" value="1"/>
</dbReference>
<dbReference type="HAMAP" id="MF_01527_B">
    <property type="entry name" value="GTP_cyclohydrol_B"/>
    <property type="match status" value="1"/>
</dbReference>
<dbReference type="InterPro" id="IPR022838">
    <property type="entry name" value="GTP_cyclohydrolase_FolE2"/>
</dbReference>
<dbReference type="InterPro" id="IPR003801">
    <property type="entry name" value="GTP_cyclohydrolase_FolE2/MptA"/>
</dbReference>
<dbReference type="NCBIfam" id="NF010200">
    <property type="entry name" value="PRK13674.1-1"/>
    <property type="match status" value="1"/>
</dbReference>
<dbReference type="PANTHER" id="PTHR36445">
    <property type="entry name" value="GTP CYCLOHYDROLASE MPTA"/>
    <property type="match status" value="1"/>
</dbReference>
<dbReference type="PANTHER" id="PTHR36445:SF1">
    <property type="entry name" value="GTP CYCLOHYDROLASE MPTA"/>
    <property type="match status" value="1"/>
</dbReference>
<dbReference type="Pfam" id="PF02649">
    <property type="entry name" value="GCHY-1"/>
    <property type="match status" value="1"/>
</dbReference>
<evidence type="ECO:0000255" key="1">
    <source>
        <dbReference type="HAMAP-Rule" id="MF_01527"/>
    </source>
</evidence>
<reference key="1">
    <citation type="journal article" date="2006" name="Appl. Environ. Microbiol.">
        <title>Complete genome sequence of the marine, chemolithoautotrophic, ammonia-oxidizing bacterium Nitrosococcus oceani ATCC 19707.</title>
        <authorList>
            <person name="Klotz M.G."/>
            <person name="Arp D.J."/>
            <person name="Chain P.S.G."/>
            <person name="El-Sheikh A.F."/>
            <person name="Hauser L.J."/>
            <person name="Hommes N.G."/>
            <person name="Larimer F.W."/>
            <person name="Malfatti S.A."/>
            <person name="Norton J.M."/>
            <person name="Poret-Peterson A.T."/>
            <person name="Vergez L.M."/>
            <person name="Ward B.B."/>
        </authorList>
    </citation>
    <scope>NUCLEOTIDE SEQUENCE [LARGE SCALE GENOMIC DNA]</scope>
    <source>
        <strain>ATCC 19707 / BCRC 17464 / JCM 30415 / NCIMB 11848 / C-107</strain>
    </source>
</reference>
<accession>Q3J9J7</accession>
<keyword id="KW-0378">Hydrolase</keyword>
<keyword id="KW-1185">Reference proteome</keyword>
<comment type="function">
    <text evidence="1">Converts GTP to 7,8-dihydroneopterin triphosphate.</text>
</comment>
<comment type="catalytic activity">
    <reaction evidence="1">
        <text>GTP + H2O = 7,8-dihydroneopterin 3'-triphosphate + formate + H(+)</text>
        <dbReference type="Rhea" id="RHEA:17473"/>
        <dbReference type="ChEBI" id="CHEBI:15377"/>
        <dbReference type="ChEBI" id="CHEBI:15378"/>
        <dbReference type="ChEBI" id="CHEBI:15740"/>
        <dbReference type="ChEBI" id="CHEBI:37565"/>
        <dbReference type="ChEBI" id="CHEBI:58462"/>
        <dbReference type="EC" id="3.5.4.16"/>
    </reaction>
</comment>
<comment type="pathway">
    <text evidence="1">Cofactor biosynthesis; 7,8-dihydroneopterin triphosphate biosynthesis; 7,8-dihydroneopterin triphosphate from GTP: step 1/1.</text>
</comment>
<comment type="similarity">
    <text evidence="1">Belongs to the GTP cyclohydrolase IV family.</text>
</comment>
<proteinExistence type="inferred from homology"/>
<name>GCH4_NITOC</name>
<organism>
    <name type="scientific">Nitrosococcus oceani (strain ATCC 19707 / BCRC 17464 / JCM 30415 / NCIMB 11848 / C-107)</name>
    <dbReference type="NCBI Taxonomy" id="323261"/>
    <lineage>
        <taxon>Bacteria</taxon>
        <taxon>Pseudomonadati</taxon>
        <taxon>Pseudomonadota</taxon>
        <taxon>Gammaproteobacteria</taxon>
        <taxon>Chromatiales</taxon>
        <taxon>Chromatiaceae</taxon>
        <taxon>Nitrosococcus</taxon>
    </lineage>
</organism>